<accession>Q1IDA4</accession>
<name>MTNA_PSEE4</name>
<evidence type="ECO:0000255" key="1">
    <source>
        <dbReference type="HAMAP-Rule" id="MF_01678"/>
    </source>
</evidence>
<evidence type="ECO:0000305" key="2"/>
<comment type="function">
    <text evidence="1">Catalyzes the interconversion of methylthioribose-1-phosphate (MTR-1-P) into methylthioribulose-1-phosphate (MTRu-1-P).</text>
</comment>
<comment type="catalytic activity">
    <reaction evidence="1">
        <text>5-(methylsulfanyl)-alpha-D-ribose 1-phosphate = 5-(methylsulfanyl)-D-ribulose 1-phosphate</text>
        <dbReference type="Rhea" id="RHEA:19989"/>
        <dbReference type="ChEBI" id="CHEBI:58533"/>
        <dbReference type="ChEBI" id="CHEBI:58548"/>
        <dbReference type="EC" id="5.3.1.23"/>
    </reaction>
</comment>
<comment type="pathway">
    <text evidence="1">Amino-acid biosynthesis; L-methionine biosynthesis via salvage pathway; L-methionine from S-methyl-5-thio-alpha-D-ribose 1-phosphate: step 1/6.</text>
</comment>
<comment type="similarity">
    <text evidence="2">Belongs to the eIF-2B alpha/beta/delta subunits family. MtnA subfamily.</text>
</comment>
<feature type="chain" id="PRO_0000357222" description="Methylthioribose-1-phosphate isomerase">
    <location>
        <begin position="1"/>
        <end position="358"/>
    </location>
</feature>
<feature type="active site" description="Proton donor" evidence="1">
    <location>
        <position position="246"/>
    </location>
</feature>
<feature type="binding site" evidence="1">
    <location>
        <begin position="54"/>
        <end position="56"/>
    </location>
    <ligand>
        <name>substrate</name>
    </ligand>
</feature>
<feature type="binding site" evidence="1">
    <location>
        <position position="96"/>
    </location>
    <ligand>
        <name>substrate</name>
    </ligand>
</feature>
<feature type="binding site" evidence="1">
    <location>
        <position position="205"/>
    </location>
    <ligand>
        <name>substrate</name>
    </ligand>
</feature>
<feature type="binding site" evidence="1">
    <location>
        <begin position="256"/>
        <end position="257"/>
    </location>
    <ligand>
        <name>substrate</name>
    </ligand>
</feature>
<protein>
    <recommendedName>
        <fullName evidence="1">Methylthioribose-1-phosphate isomerase</fullName>
        <shortName evidence="1">M1Pi</shortName>
        <shortName evidence="1">MTR-1-P isomerase</shortName>
        <ecNumber evidence="1">5.3.1.23</ecNumber>
    </recommendedName>
    <alternativeName>
        <fullName evidence="1">S-methyl-5-thioribose-1-phosphate isomerase</fullName>
    </alternativeName>
</protein>
<gene>
    <name evidence="1" type="primary">mtnA</name>
    <name type="ordered locus">PSEEN1486</name>
</gene>
<keyword id="KW-0028">Amino-acid biosynthesis</keyword>
<keyword id="KW-0413">Isomerase</keyword>
<keyword id="KW-0486">Methionine biosynthesis</keyword>
<dbReference type="EC" id="5.3.1.23" evidence="1"/>
<dbReference type="EMBL" id="CT573326">
    <property type="protein sequence ID" value="CAK14355.1"/>
    <property type="molecule type" value="Genomic_DNA"/>
</dbReference>
<dbReference type="RefSeq" id="WP_011532770.1">
    <property type="nucleotide sequence ID" value="NC_008027.1"/>
</dbReference>
<dbReference type="SMR" id="Q1IDA4"/>
<dbReference type="STRING" id="384676.PSEEN1486"/>
<dbReference type="GeneID" id="32804738"/>
<dbReference type="KEGG" id="pen:PSEEN1486"/>
<dbReference type="eggNOG" id="COG0182">
    <property type="taxonomic scope" value="Bacteria"/>
</dbReference>
<dbReference type="HOGENOM" id="CLU_016218_1_2_6"/>
<dbReference type="OrthoDB" id="9803436at2"/>
<dbReference type="UniPathway" id="UPA00904">
    <property type="reaction ID" value="UER00874"/>
</dbReference>
<dbReference type="Proteomes" id="UP000000658">
    <property type="component" value="Chromosome"/>
</dbReference>
<dbReference type="GO" id="GO:0046523">
    <property type="term" value="F:S-methyl-5-thioribose-1-phosphate isomerase activity"/>
    <property type="evidence" value="ECO:0007669"/>
    <property type="project" value="UniProtKB-UniRule"/>
</dbReference>
<dbReference type="GO" id="GO:0019509">
    <property type="term" value="P:L-methionine salvage from methylthioadenosine"/>
    <property type="evidence" value="ECO:0007669"/>
    <property type="project" value="UniProtKB-UniRule"/>
</dbReference>
<dbReference type="FunFam" id="1.20.120.420:FF:000008">
    <property type="entry name" value="Methylthioribose-1-phosphate isomerase"/>
    <property type="match status" value="1"/>
</dbReference>
<dbReference type="FunFam" id="3.40.50.10470:FF:000006">
    <property type="entry name" value="Methylthioribose-1-phosphate isomerase"/>
    <property type="match status" value="1"/>
</dbReference>
<dbReference type="Gene3D" id="1.20.120.420">
    <property type="entry name" value="translation initiation factor eif-2b, domain 1"/>
    <property type="match status" value="1"/>
</dbReference>
<dbReference type="Gene3D" id="3.40.50.10470">
    <property type="entry name" value="Translation initiation factor eif-2b, domain 2"/>
    <property type="match status" value="1"/>
</dbReference>
<dbReference type="HAMAP" id="MF_01678">
    <property type="entry name" value="Salvage_MtnA"/>
    <property type="match status" value="1"/>
</dbReference>
<dbReference type="InterPro" id="IPR000649">
    <property type="entry name" value="IF-2B-related"/>
</dbReference>
<dbReference type="InterPro" id="IPR005251">
    <property type="entry name" value="IF-M1Pi"/>
</dbReference>
<dbReference type="InterPro" id="IPR042529">
    <property type="entry name" value="IF_2B-like_C"/>
</dbReference>
<dbReference type="InterPro" id="IPR011559">
    <property type="entry name" value="Initiation_fac_2B_a/b/d"/>
</dbReference>
<dbReference type="InterPro" id="IPR027363">
    <property type="entry name" value="M1Pi_N"/>
</dbReference>
<dbReference type="InterPro" id="IPR037171">
    <property type="entry name" value="NagB/RpiA_transferase-like"/>
</dbReference>
<dbReference type="NCBIfam" id="TIGR00524">
    <property type="entry name" value="eIF-2B_rel"/>
    <property type="match status" value="1"/>
</dbReference>
<dbReference type="NCBIfam" id="NF004326">
    <property type="entry name" value="PRK05720.1"/>
    <property type="match status" value="1"/>
</dbReference>
<dbReference type="NCBIfam" id="TIGR00512">
    <property type="entry name" value="salvage_mtnA"/>
    <property type="match status" value="1"/>
</dbReference>
<dbReference type="PANTHER" id="PTHR43475">
    <property type="entry name" value="METHYLTHIORIBOSE-1-PHOSPHATE ISOMERASE"/>
    <property type="match status" value="1"/>
</dbReference>
<dbReference type="PANTHER" id="PTHR43475:SF1">
    <property type="entry name" value="METHYLTHIORIBOSE-1-PHOSPHATE ISOMERASE"/>
    <property type="match status" value="1"/>
</dbReference>
<dbReference type="Pfam" id="PF01008">
    <property type="entry name" value="IF-2B"/>
    <property type="match status" value="1"/>
</dbReference>
<dbReference type="SUPFAM" id="SSF100950">
    <property type="entry name" value="NagB/RpiA/CoA transferase-like"/>
    <property type="match status" value="1"/>
</dbReference>
<organism>
    <name type="scientific">Pseudomonas entomophila (strain L48)</name>
    <dbReference type="NCBI Taxonomy" id="384676"/>
    <lineage>
        <taxon>Bacteria</taxon>
        <taxon>Pseudomonadati</taxon>
        <taxon>Pseudomonadota</taxon>
        <taxon>Gammaproteobacteria</taxon>
        <taxon>Pseudomonadales</taxon>
        <taxon>Pseudomonadaceae</taxon>
        <taxon>Pseudomonas</taxon>
    </lineage>
</organism>
<proteinExistence type="inferred from homology"/>
<reference key="1">
    <citation type="journal article" date="2006" name="Nat. Biotechnol.">
        <title>Complete genome sequence of the entomopathogenic and metabolically versatile soil bacterium Pseudomonas entomophila.</title>
        <authorList>
            <person name="Vodovar N."/>
            <person name="Vallenet D."/>
            <person name="Cruveiller S."/>
            <person name="Rouy Z."/>
            <person name="Barbe V."/>
            <person name="Acosta C."/>
            <person name="Cattolico L."/>
            <person name="Jubin C."/>
            <person name="Lajus A."/>
            <person name="Segurens B."/>
            <person name="Vacherie B."/>
            <person name="Wincker P."/>
            <person name="Weissenbach J."/>
            <person name="Lemaitre B."/>
            <person name="Medigue C."/>
            <person name="Boccard F."/>
        </authorList>
    </citation>
    <scope>NUCLEOTIDE SEQUENCE [LARGE SCALE GENOMIC DNA]</scope>
    <source>
        <strain>L48</strain>
    </source>
</reference>
<sequence length="358" mass="38535">MREQLMAAETVTGIEWHDGALHLLDQRLLPLEQCWLTCTDVAQVAEAISEMVVRGAPAIGISAAYGLVLALRQRLAEGEGWEESLEEDFLMLGEARPTPANLFWALNRMRERLQRLRPGDDVLAVMEAEAIAIHESDREANLTMAQFGVEQIRKHQGSEQALLTHGNAGALATGGFGTALGVIRAATLEGMVEQVYVCESRPWLQGSRLTAWELAADGVPVTVVADAAAGHLMKTKGISWVVVGADCIAANGDVAAKIGTYQIAVAAMHHGLRFMVVAPSSSIDLNLATGEDIPLETRGVEELLEVAGIQVTADVEVYNPVVDVTPADLIDVIVTEKGVVERPDAAKIAQLMCRKRLH</sequence>